<accession>Q3J363</accession>
<proteinExistence type="inferred from homology"/>
<evidence type="ECO:0000255" key="1">
    <source>
        <dbReference type="HAMAP-Rule" id="MF_00340"/>
    </source>
</evidence>
<evidence type="ECO:0000256" key="2">
    <source>
        <dbReference type="SAM" id="MobiDB-lite"/>
    </source>
</evidence>
<evidence type="ECO:0000305" key="3"/>
<comment type="similarity">
    <text evidence="1">Belongs to the bacterial ribosomal protein bL32 family.</text>
</comment>
<protein>
    <recommendedName>
        <fullName evidence="1">Large ribosomal subunit protein bL32</fullName>
    </recommendedName>
    <alternativeName>
        <fullName evidence="3">50S ribosomal protein L32</fullName>
    </alternativeName>
</protein>
<sequence length="68" mass="7472">MAVPQNRVTRSRRNMRRSHDALVASNPAECPNCGELKRPHHVCGACGHYDSREVVAVTAETDLDEDAA</sequence>
<keyword id="KW-1185">Reference proteome</keyword>
<keyword id="KW-0687">Ribonucleoprotein</keyword>
<keyword id="KW-0689">Ribosomal protein</keyword>
<name>RL32_CERS4</name>
<dbReference type="EMBL" id="CP000143">
    <property type="protein sequence ID" value="ABA78771.1"/>
    <property type="molecule type" value="Genomic_DNA"/>
</dbReference>
<dbReference type="RefSeq" id="WP_002719763.1">
    <property type="nucleotide sequence ID" value="NZ_CP030271.1"/>
</dbReference>
<dbReference type="RefSeq" id="YP_352672.1">
    <property type="nucleotide sequence ID" value="NC_007493.2"/>
</dbReference>
<dbReference type="SMR" id="Q3J363"/>
<dbReference type="STRING" id="272943.RSP_2614"/>
<dbReference type="EnsemblBacteria" id="ABA78771">
    <property type="protein sequence ID" value="ABA78771"/>
    <property type="gene ID" value="RSP_2614"/>
</dbReference>
<dbReference type="GeneID" id="67446366"/>
<dbReference type="KEGG" id="rsp:RSP_2614"/>
<dbReference type="PATRIC" id="fig|272943.9.peg.1532"/>
<dbReference type="eggNOG" id="COG0333">
    <property type="taxonomic scope" value="Bacteria"/>
</dbReference>
<dbReference type="OrthoDB" id="9801927at2"/>
<dbReference type="PhylomeDB" id="Q3J363"/>
<dbReference type="Proteomes" id="UP000002703">
    <property type="component" value="Chromosome 1"/>
</dbReference>
<dbReference type="GO" id="GO:0015934">
    <property type="term" value="C:large ribosomal subunit"/>
    <property type="evidence" value="ECO:0007669"/>
    <property type="project" value="InterPro"/>
</dbReference>
<dbReference type="GO" id="GO:0003735">
    <property type="term" value="F:structural constituent of ribosome"/>
    <property type="evidence" value="ECO:0007669"/>
    <property type="project" value="InterPro"/>
</dbReference>
<dbReference type="GO" id="GO:0006412">
    <property type="term" value="P:translation"/>
    <property type="evidence" value="ECO:0007669"/>
    <property type="project" value="UniProtKB-UniRule"/>
</dbReference>
<dbReference type="Gene3D" id="1.20.5.640">
    <property type="entry name" value="Single helix bin"/>
    <property type="match status" value="1"/>
</dbReference>
<dbReference type="HAMAP" id="MF_00340">
    <property type="entry name" value="Ribosomal_bL32"/>
    <property type="match status" value="1"/>
</dbReference>
<dbReference type="InterPro" id="IPR002677">
    <property type="entry name" value="Ribosomal_bL32"/>
</dbReference>
<dbReference type="InterPro" id="IPR044957">
    <property type="entry name" value="Ribosomal_bL32_bact"/>
</dbReference>
<dbReference type="InterPro" id="IPR011332">
    <property type="entry name" value="Ribosomal_zn-bd"/>
</dbReference>
<dbReference type="NCBIfam" id="TIGR01031">
    <property type="entry name" value="rpmF_bact"/>
    <property type="match status" value="1"/>
</dbReference>
<dbReference type="PANTHER" id="PTHR35534">
    <property type="entry name" value="50S RIBOSOMAL PROTEIN L32"/>
    <property type="match status" value="1"/>
</dbReference>
<dbReference type="PANTHER" id="PTHR35534:SF1">
    <property type="entry name" value="LARGE RIBOSOMAL SUBUNIT PROTEIN BL32"/>
    <property type="match status" value="1"/>
</dbReference>
<dbReference type="Pfam" id="PF01783">
    <property type="entry name" value="Ribosomal_L32p"/>
    <property type="match status" value="1"/>
</dbReference>
<dbReference type="SUPFAM" id="SSF57829">
    <property type="entry name" value="Zn-binding ribosomal proteins"/>
    <property type="match status" value="1"/>
</dbReference>
<organism>
    <name type="scientific">Cereibacter sphaeroides (strain ATCC 17023 / DSM 158 / JCM 6121 / CCUG 31486 / LMG 2827 / NBRC 12203 / NCIMB 8253 / ATH 2.4.1.)</name>
    <name type="common">Rhodobacter sphaeroides</name>
    <dbReference type="NCBI Taxonomy" id="272943"/>
    <lineage>
        <taxon>Bacteria</taxon>
        <taxon>Pseudomonadati</taxon>
        <taxon>Pseudomonadota</taxon>
        <taxon>Alphaproteobacteria</taxon>
        <taxon>Rhodobacterales</taxon>
        <taxon>Paracoccaceae</taxon>
        <taxon>Cereibacter</taxon>
    </lineage>
</organism>
<gene>
    <name evidence="1" type="primary">rpmF</name>
    <name type="ordered locus">RHOS4_12030</name>
    <name type="ORF">RSP_2614</name>
</gene>
<reference key="1">
    <citation type="submission" date="2005-09" db="EMBL/GenBank/DDBJ databases">
        <title>Complete sequence of chromosome 1 of Rhodobacter sphaeroides 2.4.1.</title>
        <authorList>
            <person name="Copeland A."/>
            <person name="Lucas S."/>
            <person name="Lapidus A."/>
            <person name="Barry K."/>
            <person name="Detter J.C."/>
            <person name="Glavina T."/>
            <person name="Hammon N."/>
            <person name="Israni S."/>
            <person name="Pitluck S."/>
            <person name="Richardson P."/>
            <person name="Mackenzie C."/>
            <person name="Choudhary M."/>
            <person name="Larimer F."/>
            <person name="Hauser L.J."/>
            <person name="Land M."/>
            <person name="Donohue T.J."/>
            <person name="Kaplan S."/>
        </authorList>
    </citation>
    <scope>NUCLEOTIDE SEQUENCE [LARGE SCALE GENOMIC DNA]</scope>
    <source>
        <strain>ATCC 17023 / DSM 158 / JCM 6121 / CCUG 31486 / LMG 2827 / NBRC 12203 / NCIMB 8253 / ATH 2.4.1.</strain>
    </source>
</reference>
<feature type="chain" id="PRO_0000225757" description="Large ribosomal subunit protein bL32">
    <location>
        <begin position="1"/>
        <end position="68"/>
    </location>
</feature>
<feature type="region of interest" description="Disordered" evidence="2">
    <location>
        <begin position="1"/>
        <end position="20"/>
    </location>
</feature>